<proteinExistence type="evidence at transcript level"/>
<organism>
    <name type="scientific">Schizosaccharomyces pombe (strain 972 / ATCC 24843)</name>
    <name type="common">Fission yeast</name>
    <dbReference type="NCBI Taxonomy" id="284812"/>
    <lineage>
        <taxon>Eukaryota</taxon>
        <taxon>Fungi</taxon>
        <taxon>Dikarya</taxon>
        <taxon>Ascomycota</taxon>
        <taxon>Taphrinomycotina</taxon>
        <taxon>Schizosaccharomycetes</taxon>
        <taxon>Schizosaccharomycetales</taxon>
        <taxon>Schizosaccharomycetaceae</taxon>
        <taxon>Schizosaccharomyces</taxon>
    </lineage>
</organism>
<reference key="1">
    <citation type="journal article" date="2002" name="Nature">
        <title>The genome sequence of Schizosaccharomyces pombe.</title>
        <authorList>
            <person name="Wood V."/>
            <person name="Gwilliam R."/>
            <person name="Rajandream M.A."/>
            <person name="Lyne M.H."/>
            <person name="Lyne R."/>
            <person name="Stewart A."/>
            <person name="Sgouros J.G."/>
            <person name="Peat N."/>
            <person name="Hayles J."/>
            <person name="Baker S.G."/>
            <person name="Basham D."/>
            <person name="Bowman S."/>
            <person name="Brooks K."/>
            <person name="Brown D."/>
            <person name="Brown S."/>
            <person name="Chillingworth T."/>
            <person name="Churcher C.M."/>
            <person name="Collins M."/>
            <person name="Connor R."/>
            <person name="Cronin A."/>
            <person name="Davis P."/>
            <person name="Feltwell T."/>
            <person name="Fraser A."/>
            <person name="Gentles S."/>
            <person name="Goble A."/>
            <person name="Hamlin N."/>
            <person name="Harris D.E."/>
            <person name="Hidalgo J."/>
            <person name="Hodgson G."/>
            <person name="Holroyd S."/>
            <person name="Hornsby T."/>
            <person name="Howarth S."/>
            <person name="Huckle E.J."/>
            <person name="Hunt S."/>
            <person name="Jagels K."/>
            <person name="James K.D."/>
            <person name="Jones L."/>
            <person name="Jones M."/>
            <person name="Leather S."/>
            <person name="McDonald S."/>
            <person name="McLean J."/>
            <person name="Mooney P."/>
            <person name="Moule S."/>
            <person name="Mungall K.L."/>
            <person name="Murphy L.D."/>
            <person name="Niblett D."/>
            <person name="Odell C."/>
            <person name="Oliver K."/>
            <person name="O'Neil S."/>
            <person name="Pearson D."/>
            <person name="Quail M.A."/>
            <person name="Rabbinowitsch E."/>
            <person name="Rutherford K.M."/>
            <person name="Rutter S."/>
            <person name="Saunders D."/>
            <person name="Seeger K."/>
            <person name="Sharp S."/>
            <person name="Skelton J."/>
            <person name="Simmonds M.N."/>
            <person name="Squares R."/>
            <person name="Squares S."/>
            <person name="Stevens K."/>
            <person name="Taylor K."/>
            <person name="Taylor R.G."/>
            <person name="Tivey A."/>
            <person name="Walsh S.V."/>
            <person name="Warren T."/>
            <person name="Whitehead S."/>
            <person name="Woodward J.R."/>
            <person name="Volckaert G."/>
            <person name="Aert R."/>
            <person name="Robben J."/>
            <person name="Grymonprez B."/>
            <person name="Weltjens I."/>
            <person name="Vanstreels E."/>
            <person name="Rieger M."/>
            <person name="Schaefer M."/>
            <person name="Mueller-Auer S."/>
            <person name="Gabel C."/>
            <person name="Fuchs M."/>
            <person name="Duesterhoeft A."/>
            <person name="Fritzc C."/>
            <person name="Holzer E."/>
            <person name="Moestl D."/>
            <person name="Hilbert H."/>
            <person name="Borzym K."/>
            <person name="Langer I."/>
            <person name="Beck A."/>
            <person name="Lehrach H."/>
            <person name="Reinhardt R."/>
            <person name="Pohl T.M."/>
            <person name="Eger P."/>
            <person name="Zimmermann W."/>
            <person name="Wedler H."/>
            <person name="Wambutt R."/>
            <person name="Purnelle B."/>
            <person name="Goffeau A."/>
            <person name="Cadieu E."/>
            <person name="Dreano S."/>
            <person name="Gloux S."/>
            <person name="Lelaure V."/>
            <person name="Mottier S."/>
            <person name="Galibert F."/>
            <person name="Aves S.J."/>
            <person name="Xiang Z."/>
            <person name="Hunt C."/>
            <person name="Moore K."/>
            <person name="Hurst S.M."/>
            <person name="Lucas M."/>
            <person name="Rochet M."/>
            <person name="Gaillardin C."/>
            <person name="Tallada V.A."/>
            <person name="Garzon A."/>
            <person name="Thode G."/>
            <person name="Daga R.R."/>
            <person name="Cruzado L."/>
            <person name="Jimenez J."/>
            <person name="Sanchez M."/>
            <person name="del Rey F."/>
            <person name="Benito J."/>
            <person name="Dominguez A."/>
            <person name="Revuelta J.L."/>
            <person name="Moreno S."/>
            <person name="Armstrong J."/>
            <person name="Forsburg S.L."/>
            <person name="Cerutti L."/>
            <person name="Lowe T."/>
            <person name="McCombie W.R."/>
            <person name="Paulsen I."/>
            <person name="Potashkin J."/>
            <person name="Shpakovski G.V."/>
            <person name="Ussery D."/>
            <person name="Barrell B.G."/>
            <person name="Nurse P."/>
        </authorList>
    </citation>
    <scope>NUCLEOTIDE SEQUENCE [LARGE SCALE GENOMIC DNA]</scope>
    <source>
        <strain>972 / ATCC 24843</strain>
    </source>
</reference>
<reference key="2">
    <citation type="journal article" date="2001" name="Nucleic Acids Res.">
        <title>Comprehensive isolation of meiosis-specific genes identifies novel proteins and unusual non-coding transcripts in Schizosaccharomyces pombe.</title>
        <authorList>
            <person name="Watanabe T."/>
            <person name="Miyashita K."/>
            <person name="Saito T.T."/>
            <person name="Yoneki T."/>
            <person name="Kakihara Y."/>
            <person name="Nabeshima K."/>
            <person name="Kishi Y.A."/>
            <person name="Shimoda C."/>
            <person name="Nojima H."/>
        </authorList>
    </citation>
    <scope>NUCLEOTIDE SEQUENCE [MRNA] OF 384-651</scope>
    <source>
        <strain>CD16-1</strain>
    </source>
</reference>
<dbReference type="EMBL" id="CU329671">
    <property type="protein sequence ID" value="CAA22282.1"/>
    <property type="molecule type" value="Genomic_DNA"/>
</dbReference>
<dbReference type="EMBL" id="AB054317">
    <property type="protein sequence ID" value="BAB60883.1"/>
    <property type="molecule type" value="mRNA"/>
</dbReference>
<dbReference type="PIR" id="T40459">
    <property type="entry name" value="T40459"/>
</dbReference>
<dbReference type="RefSeq" id="NP_595185.1">
    <property type="nucleotide sequence ID" value="NM_001021093.2"/>
</dbReference>
<dbReference type="SMR" id="O94356"/>
<dbReference type="BioGRID" id="277296">
    <property type="interactions" value="9"/>
</dbReference>
<dbReference type="STRING" id="284812.O94356"/>
<dbReference type="iPTMnet" id="O94356"/>
<dbReference type="PaxDb" id="4896-SPBC428.07.1"/>
<dbReference type="EnsemblFungi" id="SPBC428.07.1">
    <property type="protein sequence ID" value="SPBC428.07.1:pep"/>
    <property type="gene ID" value="SPBC428.07"/>
</dbReference>
<dbReference type="GeneID" id="2540776"/>
<dbReference type="KEGG" id="spo:2540776"/>
<dbReference type="PomBase" id="SPBC428.07">
    <property type="gene designation" value="meu6"/>
</dbReference>
<dbReference type="VEuPathDB" id="FungiDB:SPBC428.07"/>
<dbReference type="eggNOG" id="ENOG502RPAT">
    <property type="taxonomic scope" value="Eukaryota"/>
</dbReference>
<dbReference type="HOGENOM" id="CLU_479927_0_0_1"/>
<dbReference type="InParanoid" id="O94356"/>
<dbReference type="OMA" id="WAAHTGK"/>
<dbReference type="PRO" id="PR:O94356"/>
<dbReference type="Proteomes" id="UP000002485">
    <property type="component" value="Chromosome II"/>
</dbReference>
<dbReference type="GO" id="GO:0005730">
    <property type="term" value="C:nucleolus"/>
    <property type="evidence" value="ECO:0007005"/>
    <property type="project" value="PomBase"/>
</dbReference>
<dbReference type="GO" id="GO:0005634">
    <property type="term" value="C:nucleus"/>
    <property type="evidence" value="ECO:0007005"/>
    <property type="project" value="PomBase"/>
</dbReference>
<dbReference type="GO" id="GO:0008289">
    <property type="term" value="F:lipid binding"/>
    <property type="evidence" value="ECO:0000255"/>
    <property type="project" value="PomBase"/>
</dbReference>
<dbReference type="GO" id="GO:0051321">
    <property type="term" value="P:meiotic cell cycle"/>
    <property type="evidence" value="ECO:0007669"/>
    <property type="project" value="UniProtKB-KW"/>
</dbReference>
<dbReference type="CDD" id="cd00821">
    <property type="entry name" value="PH"/>
    <property type="match status" value="1"/>
</dbReference>
<dbReference type="Gene3D" id="2.30.29.30">
    <property type="entry name" value="Pleckstrin-homology domain (PH domain)/Phosphotyrosine-binding domain (PTB)"/>
    <property type="match status" value="1"/>
</dbReference>
<dbReference type="InterPro" id="IPR039712">
    <property type="entry name" value="Meu6"/>
</dbReference>
<dbReference type="InterPro" id="IPR039483">
    <property type="entry name" value="Meu6_PH_dom"/>
</dbReference>
<dbReference type="InterPro" id="IPR011993">
    <property type="entry name" value="PH-like_dom_sf"/>
</dbReference>
<dbReference type="InterPro" id="IPR001849">
    <property type="entry name" value="PH_domain"/>
</dbReference>
<dbReference type="PANTHER" id="PTHR42073">
    <property type="entry name" value="MEIOTIC EXPRESSION UP-REGULATED PROTEIN 6"/>
    <property type="match status" value="1"/>
</dbReference>
<dbReference type="PANTHER" id="PTHR42073:SF1">
    <property type="entry name" value="MEIOTIC EXPRESSION UP-REGULATED PROTEIN 6"/>
    <property type="match status" value="1"/>
</dbReference>
<dbReference type="Pfam" id="PF15406">
    <property type="entry name" value="PH_6"/>
    <property type="match status" value="1"/>
</dbReference>
<dbReference type="SMART" id="SM00233">
    <property type="entry name" value="PH"/>
    <property type="match status" value="1"/>
</dbReference>
<dbReference type="SUPFAM" id="SSF50729">
    <property type="entry name" value="PH domain-like"/>
    <property type="match status" value="1"/>
</dbReference>
<dbReference type="PROSITE" id="PS50003">
    <property type="entry name" value="PH_DOMAIN"/>
    <property type="match status" value="1"/>
</dbReference>
<protein>
    <recommendedName>
        <fullName>Meiotic expression up-regulated protein 6</fullName>
    </recommendedName>
</protein>
<feature type="chain" id="PRO_0000096455" description="Meiotic expression up-regulated protein 6">
    <location>
        <begin position="1"/>
        <end position="651"/>
    </location>
</feature>
<feature type="domain" description="PH" evidence="1">
    <location>
        <begin position="194"/>
        <end position="261"/>
    </location>
</feature>
<feature type="region of interest" description="Disordered" evidence="2">
    <location>
        <begin position="1"/>
        <end position="102"/>
    </location>
</feature>
<feature type="region of interest" description="Disordered" evidence="2">
    <location>
        <begin position="365"/>
        <end position="430"/>
    </location>
</feature>
<feature type="region of interest" description="Disordered" evidence="2">
    <location>
        <begin position="468"/>
        <end position="514"/>
    </location>
</feature>
<feature type="region of interest" description="Disordered" evidence="2">
    <location>
        <begin position="587"/>
        <end position="630"/>
    </location>
</feature>
<feature type="compositionally biased region" description="Basic and acidic residues" evidence="2">
    <location>
        <begin position="1"/>
        <end position="12"/>
    </location>
</feature>
<feature type="compositionally biased region" description="Basic and acidic residues" evidence="2">
    <location>
        <begin position="21"/>
        <end position="30"/>
    </location>
</feature>
<feature type="compositionally biased region" description="Acidic residues" evidence="2">
    <location>
        <begin position="72"/>
        <end position="83"/>
    </location>
</feature>
<feature type="compositionally biased region" description="Basic and acidic residues" evidence="2">
    <location>
        <begin position="90"/>
        <end position="102"/>
    </location>
</feature>
<feature type="compositionally biased region" description="Polar residues" evidence="2">
    <location>
        <begin position="410"/>
        <end position="429"/>
    </location>
</feature>
<feature type="compositionally biased region" description="Polar residues" evidence="2">
    <location>
        <begin position="478"/>
        <end position="490"/>
    </location>
</feature>
<feature type="compositionally biased region" description="Basic residues" evidence="2">
    <location>
        <begin position="497"/>
        <end position="514"/>
    </location>
</feature>
<feature type="compositionally biased region" description="Low complexity" evidence="2">
    <location>
        <begin position="587"/>
        <end position="604"/>
    </location>
</feature>
<keyword id="KW-0469">Meiosis</keyword>
<keyword id="KW-1185">Reference proteome</keyword>
<name>MEU6_SCHPO</name>
<gene>
    <name type="primary">meu6</name>
    <name type="ORF">SPBC428.07</name>
</gene>
<accession>O94356</accession>
<accession>Q96WR3</accession>
<evidence type="ECO:0000255" key="1">
    <source>
        <dbReference type="PROSITE-ProRule" id="PRU00145"/>
    </source>
</evidence>
<evidence type="ECO:0000256" key="2">
    <source>
        <dbReference type="SAM" id="MobiDB-lite"/>
    </source>
</evidence>
<sequence length="651" mass="71164">MSYEGREERPEQIAEPTFENVSEHNEHDSGSAEAQVETLEVPLSNETDNDDATENAVPAEVQAPEEPKEPETVDNIDPADDDPNSVAAPKVEEKKSKKKAKDEKPLTYTTGGYLYCRSNGLIPHVMKRYFYMLEGPMSMDLLDHYYKKHFHGTLQGNPTEPSLASEQMHDSDADSLFQSANDHLNRIAKATQDCRGLLFYSKSQSTSVPSGIINLTDAVSIEPGTGNKFTINFNNGKSETLEALDPESKNTWITDLKNAIAKKKETKDKIKELRAYNDTLKRLGKLAARSGPSASETFRYFLPMLSNGRDAKKSSSKSHGGKQNNSVAKDGLFDFFQNMIKGKTPQNDTASPIDNETSADPVDTTVEAQSVEVPENETNQIPTTEEHFPATTEEVAPASEEKPATGPAEESTSTQNVEQASTQNDNGTPIGQIADAIEEDVKGTAQSVEQAFIEETDIALPDIALPDVATPTADDQDPSTAATNEESVVSNEDRTSKKAGKKHHRHHKKKKGGNKRVFGFKLHKYAKPTKSVKTLQADPSLEFAKAGFEIFPSNLSKKLSGLVQKKVHKKFDKDGRLKEISQFSKTTIKPETPLTPTTTPTPRTAAQEDPAEETTDALASAEGENNQMPQVLETEAAPSIASEGRSITVNA</sequence>